<accession>Q6DC60</accession>
<evidence type="ECO:0000256" key="1">
    <source>
        <dbReference type="SAM" id="MobiDB-lite"/>
    </source>
</evidence>
<evidence type="ECO:0000305" key="2"/>
<organism>
    <name type="scientific">Danio rerio</name>
    <name type="common">Zebrafish</name>
    <name type="synonym">Brachydanio rerio</name>
    <dbReference type="NCBI Taxonomy" id="7955"/>
    <lineage>
        <taxon>Eukaryota</taxon>
        <taxon>Metazoa</taxon>
        <taxon>Chordata</taxon>
        <taxon>Craniata</taxon>
        <taxon>Vertebrata</taxon>
        <taxon>Euteleostomi</taxon>
        <taxon>Actinopterygii</taxon>
        <taxon>Neopterygii</taxon>
        <taxon>Teleostei</taxon>
        <taxon>Ostariophysi</taxon>
        <taxon>Cypriniformes</taxon>
        <taxon>Danionidae</taxon>
        <taxon>Danioninae</taxon>
        <taxon>Danio</taxon>
    </lineage>
</organism>
<comment type="similarity">
    <text evidence="2">Belongs to the FAM219 family.</text>
</comment>
<gene>
    <name type="primary">fam219a</name>
    <name type="ORF">zgc:101028</name>
</gene>
<protein>
    <recommendedName>
        <fullName>Protein FAM219A</fullName>
    </recommendedName>
</protein>
<keyword id="KW-1185">Reference proteome</keyword>
<feature type="chain" id="PRO_0000089675" description="Protein FAM219A">
    <location>
        <begin position="1"/>
        <end position="186"/>
    </location>
</feature>
<feature type="region of interest" description="Disordered" evidence="1">
    <location>
        <begin position="1"/>
        <end position="47"/>
    </location>
</feature>
<feature type="region of interest" description="Disordered" evidence="1">
    <location>
        <begin position="59"/>
        <end position="132"/>
    </location>
</feature>
<feature type="compositionally biased region" description="Polar residues" evidence="1">
    <location>
        <begin position="67"/>
        <end position="81"/>
    </location>
</feature>
<feature type="compositionally biased region" description="Low complexity" evidence="1">
    <location>
        <begin position="123"/>
        <end position="132"/>
    </location>
</feature>
<sequence length="186" mass="20703">MMEEIDRFQVPPVNPEMKLLQDPAETSTIENETAPREPESVAINYKPSPLQVKIEKQRELARKGSVKNGTVGSPVNQQPKKNNVMARTRLVVPNKGYSSLDQSPDEKPLVALDTDSDDDFDMSRYSSSGYSSAEQINQDLNIQLLKDGYRLDEIPDDEDLDLIPPKSVNPTCMCCQATSSTACQIQ</sequence>
<name>F219A_DANRE</name>
<reference key="1">
    <citation type="submission" date="2004-07" db="EMBL/GenBank/DDBJ databases">
        <authorList>
            <consortium name="NIH - Zebrafish Gene Collection (ZGC) project"/>
        </authorList>
    </citation>
    <scope>NUCLEOTIDE SEQUENCE [LARGE SCALE MRNA]</scope>
    <source>
        <tissue>Embryo</tissue>
    </source>
</reference>
<proteinExistence type="evidence at transcript level"/>
<dbReference type="EMBL" id="BC078224">
    <property type="protein sequence ID" value="AAH78224.1"/>
    <property type="molecule type" value="mRNA"/>
</dbReference>
<dbReference type="RefSeq" id="NP_001003591.1">
    <property type="nucleotide sequence ID" value="NM_001003591.1"/>
</dbReference>
<dbReference type="SMR" id="Q6DC60"/>
<dbReference type="FunCoup" id="Q6DC60">
    <property type="interactions" value="148"/>
</dbReference>
<dbReference type="STRING" id="7955.ENSDARP00000002156"/>
<dbReference type="PaxDb" id="7955-ENSDARP00000002156"/>
<dbReference type="Ensembl" id="ENSDART00000024616">
    <property type="protein sequence ID" value="ENSDARP00000002156"/>
    <property type="gene ID" value="ENSDARG00000016396"/>
</dbReference>
<dbReference type="GeneID" id="445197"/>
<dbReference type="KEGG" id="dre:445197"/>
<dbReference type="AGR" id="ZFIN:ZDB-GENE-040801-110"/>
<dbReference type="CTD" id="445197"/>
<dbReference type="ZFIN" id="ZDB-GENE-040801-110">
    <property type="gene designation" value="fam219aa"/>
</dbReference>
<dbReference type="eggNOG" id="ENOG502QS86">
    <property type="taxonomic scope" value="Eukaryota"/>
</dbReference>
<dbReference type="InParanoid" id="Q6DC60"/>
<dbReference type="OMA" id="SCCNPSQ"/>
<dbReference type="OrthoDB" id="6119141at2759"/>
<dbReference type="PhylomeDB" id="Q6DC60"/>
<dbReference type="TreeFam" id="TF331928"/>
<dbReference type="PRO" id="PR:Q6DC60"/>
<dbReference type="Proteomes" id="UP000000437">
    <property type="component" value="Chromosome 21"/>
</dbReference>
<dbReference type="Bgee" id="ENSDARG00000016396">
    <property type="expression patterns" value="Expressed in testis and 20 other cell types or tissues"/>
</dbReference>
<dbReference type="ExpressionAtlas" id="Q6DC60">
    <property type="expression patterns" value="baseline"/>
</dbReference>
<dbReference type="InterPro" id="IPR029339">
    <property type="entry name" value="FAM219"/>
</dbReference>
<dbReference type="PANTHER" id="PTHR31281">
    <property type="entry name" value="PROTEIN FAM219A"/>
    <property type="match status" value="1"/>
</dbReference>
<dbReference type="PANTHER" id="PTHR31281:SF0">
    <property type="entry name" value="PROTEIN FAM219A"/>
    <property type="match status" value="1"/>
</dbReference>
<dbReference type="Pfam" id="PF15260">
    <property type="entry name" value="FAM219A"/>
    <property type="match status" value="1"/>
</dbReference>